<evidence type="ECO:0000255" key="1">
    <source>
        <dbReference type="HAMAP-Rule" id="MF_01215"/>
    </source>
</evidence>
<accession>A5FP84</accession>
<comment type="catalytic activity">
    <reaction evidence="1">
        <text>orotidine 5'-phosphate + H(+) = UMP + CO2</text>
        <dbReference type="Rhea" id="RHEA:11596"/>
        <dbReference type="ChEBI" id="CHEBI:15378"/>
        <dbReference type="ChEBI" id="CHEBI:16526"/>
        <dbReference type="ChEBI" id="CHEBI:57538"/>
        <dbReference type="ChEBI" id="CHEBI:57865"/>
        <dbReference type="EC" id="4.1.1.23"/>
    </reaction>
</comment>
<comment type="pathway">
    <text evidence="1">Pyrimidine metabolism; UMP biosynthesis via de novo pathway; UMP from orotate: step 2/2.</text>
</comment>
<comment type="similarity">
    <text evidence="1">Belongs to the OMP decarboxylase family. Type 2 subfamily.</text>
</comment>
<gene>
    <name evidence="1" type="primary">pyrF</name>
    <name type="ordered locus">DehaBAV1_0012</name>
</gene>
<keyword id="KW-0210">Decarboxylase</keyword>
<keyword id="KW-0456">Lyase</keyword>
<keyword id="KW-0665">Pyrimidine biosynthesis</keyword>
<reference key="1">
    <citation type="submission" date="2007-05" db="EMBL/GenBank/DDBJ databases">
        <title>Complete sequence of Dehalococcoides sp. BAV1.</title>
        <authorList>
            <consortium name="US DOE Joint Genome Institute"/>
            <person name="Copeland A."/>
            <person name="Lucas S."/>
            <person name="Lapidus A."/>
            <person name="Barry K."/>
            <person name="Detter J.C."/>
            <person name="Glavina del Rio T."/>
            <person name="Hammon N."/>
            <person name="Israni S."/>
            <person name="Pitluck S."/>
            <person name="Lowry S."/>
            <person name="Clum A."/>
            <person name="Schmutz J."/>
            <person name="Larimer F."/>
            <person name="Land M."/>
            <person name="Hauser L."/>
            <person name="Kyrpides N."/>
            <person name="Kim E."/>
            <person name="Ritalahti K.M."/>
            <person name="Loeffler F."/>
            <person name="Richardson P."/>
        </authorList>
    </citation>
    <scope>NUCLEOTIDE SEQUENCE [LARGE SCALE GENOMIC DNA]</scope>
    <source>
        <strain>ATCC BAA-2100 / JCM 16839 / KCTC 5957 / BAV1</strain>
    </source>
</reference>
<proteinExistence type="inferred from homology"/>
<organism>
    <name type="scientific">Dehalococcoides mccartyi (strain ATCC BAA-2100 / JCM 16839 / KCTC 5957 / BAV1)</name>
    <dbReference type="NCBI Taxonomy" id="216389"/>
    <lineage>
        <taxon>Bacteria</taxon>
        <taxon>Bacillati</taxon>
        <taxon>Chloroflexota</taxon>
        <taxon>Dehalococcoidia</taxon>
        <taxon>Dehalococcoidales</taxon>
        <taxon>Dehalococcoidaceae</taxon>
        <taxon>Dehalococcoides</taxon>
    </lineage>
</organism>
<dbReference type="EC" id="4.1.1.23" evidence="1"/>
<dbReference type="EMBL" id="CP000688">
    <property type="protein sequence ID" value="ABQ16604.1"/>
    <property type="molecule type" value="Genomic_DNA"/>
</dbReference>
<dbReference type="SMR" id="A5FP84"/>
<dbReference type="KEGG" id="deb:DehaBAV1_0012"/>
<dbReference type="PATRIC" id="fig|216389.18.peg.12"/>
<dbReference type="HOGENOM" id="CLU_060704_1_0_0"/>
<dbReference type="UniPathway" id="UPA00070">
    <property type="reaction ID" value="UER00120"/>
</dbReference>
<dbReference type="GO" id="GO:0004590">
    <property type="term" value="F:orotidine-5'-phosphate decarboxylase activity"/>
    <property type="evidence" value="ECO:0007669"/>
    <property type="project" value="UniProtKB-UniRule"/>
</dbReference>
<dbReference type="GO" id="GO:0006207">
    <property type="term" value="P:'de novo' pyrimidine nucleobase biosynthetic process"/>
    <property type="evidence" value="ECO:0007669"/>
    <property type="project" value="InterPro"/>
</dbReference>
<dbReference type="GO" id="GO:0044205">
    <property type="term" value="P:'de novo' UMP biosynthetic process"/>
    <property type="evidence" value="ECO:0007669"/>
    <property type="project" value="UniProtKB-UniRule"/>
</dbReference>
<dbReference type="CDD" id="cd04725">
    <property type="entry name" value="OMP_decarboxylase_like"/>
    <property type="match status" value="1"/>
</dbReference>
<dbReference type="FunFam" id="3.20.20.70:FF:000157">
    <property type="entry name" value="Orotidine 5'-phosphate decarboxylase"/>
    <property type="match status" value="1"/>
</dbReference>
<dbReference type="Gene3D" id="3.20.20.70">
    <property type="entry name" value="Aldolase class I"/>
    <property type="match status" value="1"/>
</dbReference>
<dbReference type="HAMAP" id="MF_01215">
    <property type="entry name" value="OMPdecase_type2"/>
    <property type="match status" value="1"/>
</dbReference>
<dbReference type="InterPro" id="IPR013785">
    <property type="entry name" value="Aldolase_TIM"/>
</dbReference>
<dbReference type="InterPro" id="IPR011995">
    <property type="entry name" value="OMPdecase_type-2"/>
</dbReference>
<dbReference type="InterPro" id="IPR001754">
    <property type="entry name" value="OMPdeCOase_dom"/>
</dbReference>
<dbReference type="InterPro" id="IPR011060">
    <property type="entry name" value="RibuloseP-bd_barrel"/>
</dbReference>
<dbReference type="NCBIfam" id="TIGR02127">
    <property type="entry name" value="pyrF_sub2"/>
    <property type="match status" value="1"/>
</dbReference>
<dbReference type="PANTHER" id="PTHR43375">
    <property type="entry name" value="OROTIDINE 5'-PHOSPHATE DECARBOXYLASE"/>
    <property type="match status" value="1"/>
</dbReference>
<dbReference type="PANTHER" id="PTHR43375:SF1">
    <property type="entry name" value="OROTIDINE 5'-PHOSPHATE DECARBOXYLASE"/>
    <property type="match status" value="1"/>
</dbReference>
<dbReference type="Pfam" id="PF00215">
    <property type="entry name" value="OMPdecase"/>
    <property type="match status" value="1"/>
</dbReference>
<dbReference type="SMART" id="SM00934">
    <property type="entry name" value="OMPdecase"/>
    <property type="match status" value="1"/>
</dbReference>
<dbReference type="SUPFAM" id="SSF51366">
    <property type="entry name" value="Ribulose-phoshate binding barrel"/>
    <property type="match status" value="1"/>
</dbReference>
<protein>
    <recommendedName>
        <fullName evidence="1">Orotidine 5'-phosphate decarboxylase</fullName>
        <ecNumber evidence="1">4.1.1.23</ecNumber>
    </recommendedName>
    <alternativeName>
        <fullName evidence="1">OMP decarboxylase</fullName>
        <shortName evidence="1">OMPDCase</shortName>
        <shortName evidence="1">OMPdecase</shortName>
    </alternativeName>
</protein>
<name>PYRF_DEHMB</name>
<sequence length="270" mass="30014">MKFLEKLKQAGNRNKSLLCVGLDPDPKLMPVGMSALEFNREIIEATAPFVCGYKINLAFYEALGKQGWEILSETCEFIPRELITIADAKRGDIGNTSKAYARAILDELDCDGVTVSPYLGYDSLEPFIEYQDKGIFILCLTSNQGSTDFQMLKTEYLGQKRFLYEVVADKASLWNRYENIGLVVGATQQEELKKLRLIYPKLPFLIPGIGAQGGDLKATIENGTNPNGELAIICASRGILYARSGSEFAQGAAEAAEQMRDAINHYRKRF</sequence>
<feature type="chain" id="PRO_1000085574" description="Orotidine 5'-phosphate decarboxylase">
    <location>
        <begin position="1"/>
        <end position="270"/>
    </location>
</feature>
<feature type="active site" description="Proton donor" evidence="1">
    <location>
        <position position="89"/>
    </location>
</feature>